<keyword id="KW-0002">3D-structure</keyword>
<keyword id="KW-1003">Cell membrane</keyword>
<keyword id="KW-0406">Ion transport</keyword>
<keyword id="KW-0472">Membrane</keyword>
<keyword id="KW-0630">Potassium</keyword>
<keyword id="KW-0633">Potassium transport</keyword>
<keyword id="KW-1185">Reference proteome</keyword>
<keyword id="KW-0812">Transmembrane</keyword>
<keyword id="KW-1133">Transmembrane helix</keyword>
<keyword id="KW-0813">Transport</keyword>
<comment type="function">
    <text evidence="2 4">Integral membrane subunit of the KtrAB potassium uptake transporter. The 2 major potassium transporter complexes KtrAB and KtrCD confer resistance to both suddenly imposed and prolonged osmotic stress.</text>
</comment>
<comment type="subunit">
    <text evidence="3 4">Homodimer. Part of the KtrAB complex formed by an octameric catalytic ring of KtrA and a membrane associated dimer of KtrB forming a potassium channel.</text>
</comment>
<comment type="interaction">
    <interactant intactId="EBI-16045470">
        <id>O32081</id>
    </interactant>
    <interactant intactId="EBI-16045427">
        <id>O32080</id>
        <label>ktrA</label>
    </interactant>
    <organismsDiffer>false</organismsDiffer>
    <experiments>2</experiments>
</comment>
<comment type="subcellular location">
    <subcellularLocation>
        <location evidence="5">Cell membrane</location>
        <topology evidence="5">Multi-pass membrane protein</topology>
    </subcellularLocation>
</comment>
<comment type="disruption phenotype">
    <text evidence="2">Impaired potassium uptake.</text>
</comment>
<comment type="similarity">
    <text evidence="5">Belongs to the TrkH potassium transport family. Ktr (TC 2.A.38.4) subfamily.</text>
</comment>
<name>KTRB_BACSU</name>
<gene>
    <name type="primary">ktrB</name>
    <name type="synonym">yubG</name>
    <name type="ordered locus">BSU31100</name>
</gene>
<accession>O32081</accession>
<dbReference type="EMBL" id="AL009126">
    <property type="protein sequence ID" value="CAB15088.1"/>
    <property type="molecule type" value="Genomic_DNA"/>
</dbReference>
<dbReference type="PIR" id="B70007">
    <property type="entry name" value="B70007"/>
</dbReference>
<dbReference type="RefSeq" id="NP_390988.1">
    <property type="nucleotide sequence ID" value="NC_000964.3"/>
</dbReference>
<dbReference type="RefSeq" id="WP_003243582.1">
    <property type="nucleotide sequence ID" value="NZ_OZ025638.1"/>
</dbReference>
<dbReference type="PDB" id="4J7C">
    <property type="method" value="X-ray"/>
    <property type="resolution" value="3.50 A"/>
    <property type="chains" value="I/J/K/L=1-445"/>
</dbReference>
<dbReference type="PDB" id="5BUT">
    <property type="method" value="X-ray"/>
    <property type="resolution" value="5.97 A"/>
    <property type="chains" value="I/J/K/L=1-445"/>
</dbReference>
<dbReference type="PDB" id="8K1S">
    <property type="method" value="EM"/>
    <property type="resolution" value="2.83 A"/>
    <property type="chains" value="I/J/K/L=1-445"/>
</dbReference>
<dbReference type="PDB" id="8K1T">
    <property type="method" value="EM"/>
    <property type="resolution" value="2.48 A"/>
    <property type="chains" value="I/J/K/L=1-445"/>
</dbReference>
<dbReference type="PDB" id="8K1U">
    <property type="method" value="EM"/>
    <property type="resolution" value="2.82 A"/>
    <property type="chains" value="I/J/K/L=1-445"/>
</dbReference>
<dbReference type="PDB" id="8POO">
    <property type="method" value="X-ray"/>
    <property type="resolution" value="5.77 A"/>
    <property type="chains" value="A/B/I/J=1-445"/>
</dbReference>
<dbReference type="PDB" id="8XMH">
    <property type="method" value="EM"/>
    <property type="resolution" value="2.85 A"/>
    <property type="chains" value="I/J/K/L=1-445"/>
</dbReference>
<dbReference type="PDB" id="8XMI">
    <property type="method" value="EM"/>
    <property type="resolution" value="3.00 A"/>
    <property type="chains" value="I/J/K/L=1-445"/>
</dbReference>
<dbReference type="PDBsum" id="4J7C"/>
<dbReference type="PDBsum" id="5BUT"/>
<dbReference type="PDBsum" id="8K1S"/>
<dbReference type="PDBsum" id="8K1T"/>
<dbReference type="PDBsum" id="8K1U"/>
<dbReference type="PDBsum" id="8POO"/>
<dbReference type="PDBsum" id="8XMH"/>
<dbReference type="PDBsum" id="8XMI"/>
<dbReference type="EMDB" id="EMD-36800"/>
<dbReference type="EMDB" id="EMD-36801"/>
<dbReference type="EMDB" id="EMD-36802"/>
<dbReference type="EMDB" id="EMD-36803"/>
<dbReference type="EMDB" id="EMD-36804"/>
<dbReference type="EMDB" id="EMD-38477"/>
<dbReference type="EMDB" id="EMD-38478"/>
<dbReference type="SMR" id="O32081"/>
<dbReference type="DIP" id="DIP-60210N"/>
<dbReference type="FunCoup" id="O32081">
    <property type="interactions" value="381"/>
</dbReference>
<dbReference type="IntAct" id="O32081">
    <property type="interactions" value="1"/>
</dbReference>
<dbReference type="STRING" id="224308.BSU31100"/>
<dbReference type="TCDB" id="2.A.38.4.3">
    <property type="family name" value="the k(+) transporter (trk) family"/>
</dbReference>
<dbReference type="PaxDb" id="224308-BSU31100"/>
<dbReference type="EnsemblBacteria" id="CAB15088">
    <property type="protein sequence ID" value="CAB15088"/>
    <property type="gene ID" value="BSU_31100"/>
</dbReference>
<dbReference type="GeneID" id="938835"/>
<dbReference type="KEGG" id="bsu:BSU31100"/>
<dbReference type="PATRIC" id="fig|224308.179.peg.3370"/>
<dbReference type="eggNOG" id="COG0168">
    <property type="taxonomic scope" value="Bacteria"/>
</dbReference>
<dbReference type="InParanoid" id="O32081"/>
<dbReference type="OrthoDB" id="9810952at2"/>
<dbReference type="PhylomeDB" id="O32081"/>
<dbReference type="BioCyc" id="BSUB:BSU31100-MONOMER"/>
<dbReference type="EvolutionaryTrace" id="O32081"/>
<dbReference type="Proteomes" id="UP000001570">
    <property type="component" value="Chromosome"/>
</dbReference>
<dbReference type="GO" id="GO:0005886">
    <property type="term" value="C:plasma membrane"/>
    <property type="evidence" value="ECO:0000318"/>
    <property type="project" value="GO_Central"/>
</dbReference>
<dbReference type="GO" id="GO:0015079">
    <property type="term" value="F:potassium ion transmembrane transporter activity"/>
    <property type="evidence" value="ECO:0000318"/>
    <property type="project" value="GO_Central"/>
</dbReference>
<dbReference type="GO" id="GO:0015379">
    <property type="term" value="F:potassium:chloride symporter activity"/>
    <property type="evidence" value="ECO:0007669"/>
    <property type="project" value="InterPro"/>
</dbReference>
<dbReference type="GO" id="GO:0071805">
    <property type="term" value="P:potassium ion transmembrane transport"/>
    <property type="evidence" value="ECO:0000318"/>
    <property type="project" value="GO_Central"/>
</dbReference>
<dbReference type="InterPro" id="IPR003445">
    <property type="entry name" value="Cat_transpt"/>
</dbReference>
<dbReference type="InterPro" id="IPR004772">
    <property type="entry name" value="TrkH"/>
</dbReference>
<dbReference type="NCBIfam" id="TIGR00933">
    <property type="entry name" value="2a38"/>
    <property type="match status" value="1"/>
</dbReference>
<dbReference type="PANTHER" id="PTHR32024:SF1">
    <property type="entry name" value="KTR SYSTEM POTASSIUM UPTAKE PROTEIN B"/>
    <property type="match status" value="1"/>
</dbReference>
<dbReference type="PANTHER" id="PTHR32024">
    <property type="entry name" value="TRK SYSTEM POTASSIUM UPTAKE PROTEIN TRKG-RELATED"/>
    <property type="match status" value="1"/>
</dbReference>
<dbReference type="Pfam" id="PF02386">
    <property type="entry name" value="TrkH"/>
    <property type="match status" value="1"/>
</dbReference>
<reference key="1">
    <citation type="journal article" date="1997" name="Nature">
        <title>The complete genome sequence of the Gram-positive bacterium Bacillus subtilis.</title>
        <authorList>
            <person name="Kunst F."/>
            <person name="Ogasawara N."/>
            <person name="Moszer I."/>
            <person name="Albertini A.M."/>
            <person name="Alloni G."/>
            <person name="Azevedo V."/>
            <person name="Bertero M.G."/>
            <person name="Bessieres P."/>
            <person name="Bolotin A."/>
            <person name="Borchert S."/>
            <person name="Borriss R."/>
            <person name="Boursier L."/>
            <person name="Brans A."/>
            <person name="Braun M."/>
            <person name="Brignell S.C."/>
            <person name="Bron S."/>
            <person name="Brouillet S."/>
            <person name="Bruschi C.V."/>
            <person name="Caldwell B."/>
            <person name="Capuano V."/>
            <person name="Carter N.M."/>
            <person name="Choi S.-K."/>
            <person name="Codani J.-J."/>
            <person name="Connerton I.F."/>
            <person name="Cummings N.J."/>
            <person name="Daniel R.A."/>
            <person name="Denizot F."/>
            <person name="Devine K.M."/>
            <person name="Duesterhoeft A."/>
            <person name="Ehrlich S.D."/>
            <person name="Emmerson P.T."/>
            <person name="Entian K.-D."/>
            <person name="Errington J."/>
            <person name="Fabret C."/>
            <person name="Ferrari E."/>
            <person name="Foulger D."/>
            <person name="Fritz C."/>
            <person name="Fujita M."/>
            <person name="Fujita Y."/>
            <person name="Fuma S."/>
            <person name="Galizzi A."/>
            <person name="Galleron N."/>
            <person name="Ghim S.-Y."/>
            <person name="Glaser P."/>
            <person name="Goffeau A."/>
            <person name="Golightly E.J."/>
            <person name="Grandi G."/>
            <person name="Guiseppi G."/>
            <person name="Guy B.J."/>
            <person name="Haga K."/>
            <person name="Haiech J."/>
            <person name="Harwood C.R."/>
            <person name="Henaut A."/>
            <person name="Hilbert H."/>
            <person name="Holsappel S."/>
            <person name="Hosono S."/>
            <person name="Hullo M.-F."/>
            <person name="Itaya M."/>
            <person name="Jones L.-M."/>
            <person name="Joris B."/>
            <person name="Karamata D."/>
            <person name="Kasahara Y."/>
            <person name="Klaerr-Blanchard M."/>
            <person name="Klein C."/>
            <person name="Kobayashi Y."/>
            <person name="Koetter P."/>
            <person name="Koningstein G."/>
            <person name="Krogh S."/>
            <person name="Kumano M."/>
            <person name="Kurita K."/>
            <person name="Lapidus A."/>
            <person name="Lardinois S."/>
            <person name="Lauber J."/>
            <person name="Lazarevic V."/>
            <person name="Lee S.-M."/>
            <person name="Levine A."/>
            <person name="Liu H."/>
            <person name="Masuda S."/>
            <person name="Mauel C."/>
            <person name="Medigue C."/>
            <person name="Medina N."/>
            <person name="Mellado R.P."/>
            <person name="Mizuno M."/>
            <person name="Moestl D."/>
            <person name="Nakai S."/>
            <person name="Noback M."/>
            <person name="Noone D."/>
            <person name="O'Reilly M."/>
            <person name="Ogawa K."/>
            <person name="Ogiwara A."/>
            <person name="Oudega B."/>
            <person name="Park S.-H."/>
            <person name="Parro V."/>
            <person name="Pohl T.M."/>
            <person name="Portetelle D."/>
            <person name="Porwollik S."/>
            <person name="Prescott A.M."/>
            <person name="Presecan E."/>
            <person name="Pujic P."/>
            <person name="Purnelle B."/>
            <person name="Rapoport G."/>
            <person name="Rey M."/>
            <person name="Reynolds S."/>
            <person name="Rieger M."/>
            <person name="Rivolta C."/>
            <person name="Rocha E."/>
            <person name="Roche B."/>
            <person name="Rose M."/>
            <person name="Sadaie Y."/>
            <person name="Sato T."/>
            <person name="Scanlan E."/>
            <person name="Schleich S."/>
            <person name="Schroeter R."/>
            <person name="Scoffone F."/>
            <person name="Sekiguchi J."/>
            <person name="Sekowska A."/>
            <person name="Seror S.J."/>
            <person name="Serror P."/>
            <person name="Shin B.-S."/>
            <person name="Soldo B."/>
            <person name="Sorokin A."/>
            <person name="Tacconi E."/>
            <person name="Takagi T."/>
            <person name="Takahashi H."/>
            <person name="Takemaru K."/>
            <person name="Takeuchi M."/>
            <person name="Tamakoshi A."/>
            <person name="Tanaka T."/>
            <person name="Terpstra P."/>
            <person name="Tognoni A."/>
            <person name="Tosato V."/>
            <person name="Uchiyama S."/>
            <person name="Vandenbol M."/>
            <person name="Vannier F."/>
            <person name="Vassarotti A."/>
            <person name="Viari A."/>
            <person name="Wambutt R."/>
            <person name="Wedler E."/>
            <person name="Wedler H."/>
            <person name="Weitzenegger T."/>
            <person name="Winters P."/>
            <person name="Wipat A."/>
            <person name="Yamamoto H."/>
            <person name="Yamane K."/>
            <person name="Yasumoto K."/>
            <person name="Yata K."/>
            <person name="Yoshida K."/>
            <person name="Yoshikawa H.-F."/>
            <person name="Zumstein E."/>
            <person name="Yoshikawa H."/>
            <person name="Danchin A."/>
        </authorList>
    </citation>
    <scope>NUCLEOTIDE SEQUENCE [LARGE SCALE GENOMIC DNA]</scope>
    <source>
        <strain>168</strain>
    </source>
</reference>
<reference key="2">
    <citation type="journal article" date="2003" name="J. Bacteriol.">
        <title>KtrAB and KtrCD: two K+ uptake systems in Bacillus subtilis and their role in adaptation to hypertonicity.</title>
        <authorList>
            <person name="Holtmann G."/>
            <person name="Bakker E.P."/>
            <person name="Uozumi N."/>
            <person name="Bremer E."/>
        </authorList>
    </citation>
    <scope>FUNCTION</scope>
    <scope>DISRUPTION PHENOTYPE</scope>
</reference>
<reference key="3">
    <citation type="journal article" date="2006" name="Cell">
        <title>The RCK domain of the KtrAB K+ transporter: multiple conformations of an octameric ring.</title>
        <authorList>
            <person name="Albright R.A."/>
            <person name="Ibar J.-L.V."/>
            <person name="Kim C.U."/>
            <person name="Gruner S.M."/>
            <person name="Morais-Cabral J.H."/>
        </authorList>
    </citation>
    <scope>INTERACTION WITH KTRA</scope>
    <scope>SUBUNIT</scope>
</reference>
<reference key="4">
    <citation type="journal article" date="2007" name="J. Biol. Chem.">
        <title>Probing the structure of the dimeric KtrB membrane protein.</title>
        <authorList>
            <person name="Albright R.A."/>
            <person name="Joh K."/>
            <person name="Morais-Cabral J.H."/>
        </authorList>
    </citation>
    <scope>FUNCTION</scope>
    <scope>MUTAGENESIS OF 436-ARG--GLY-445</scope>
    <scope>SUBUNIT</scope>
</reference>
<sequence>MTLQKDKVIKWVRFTPPQVLAIGFFLTIIIGAVLLMLPISTTKPLSWIDALFTAASATTVTGLAVVDTGTQFTVFGQTVIMGLIQIGGLGFMTFAVLIVMILGKKIGLKERMLVQEALNQPTIGGVIGLVKVLFLFSISIELIAALILSIRLVPQYGWSSGLFASLFHAISAFNNAGFSLWPDNLMSYVGDPTVNLVITFLFITGGIGFTVLFDVMKNRRFKTFSLHTKLMLTGTLMLNAIAMLTVFILEYSNPGTLGHLHIVDKLWASYFQAVTPRTAGFNSLDFGSMREGTIVFTLLLMFIGAGSASTASGIKLTTFIVILTSVIAYLRGKKETVIFRRSIKYPIIIKALAVSVTSLFIVFLGIFALTITEQAPFLQIVFETFSAFGTVGLTMGLTPELTTAGKCIIIVIMFIGRIGPLTFVFSFAKTEQSNIRYPDGEVFTG</sequence>
<evidence type="ECO:0000255" key="1"/>
<evidence type="ECO:0000269" key="2">
    <source>
    </source>
</evidence>
<evidence type="ECO:0000269" key="3">
    <source>
    </source>
</evidence>
<evidence type="ECO:0000269" key="4">
    <source>
    </source>
</evidence>
<evidence type="ECO:0000305" key="5"/>
<evidence type="ECO:0007829" key="6">
    <source>
        <dbReference type="PDB" id="8K1S"/>
    </source>
</evidence>
<evidence type="ECO:0007829" key="7">
    <source>
        <dbReference type="PDB" id="8K1T"/>
    </source>
</evidence>
<feature type="chain" id="PRO_0000360618" description="Ktr system potassium uptake protein B">
    <location>
        <begin position="1"/>
        <end position="445"/>
    </location>
</feature>
<feature type="transmembrane region" description="Helical" evidence="1">
    <location>
        <begin position="19"/>
        <end position="39"/>
    </location>
</feature>
<feature type="transmembrane region" description="Helical" evidence="1">
    <location>
        <begin position="46"/>
        <end position="66"/>
    </location>
</feature>
<feature type="transmembrane region" description="Helical" evidence="1">
    <location>
        <begin position="79"/>
        <end position="99"/>
    </location>
</feature>
<feature type="transmembrane region" description="Helical" evidence="1">
    <location>
        <begin position="127"/>
        <end position="147"/>
    </location>
</feature>
<feature type="transmembrane region" description="Helical" evidence="1">
    <location>
        <begin position="161"/>
        <end position="181"/>
    </location>
</feature>
<feature type="transmembrane region" description="Helical" evidence="1">
    <location>
        <begin position="196"/>
        <end position="216"/>
    </location>
</feature>
<feature type="transmembrane region" description="Helical" evidence="1">
    <location>
        <begin position="230"/>
        <end position="250"/>
    </location>
</feature>
<feature type="transmembrane region" description="Helical" evidence="1">
    <location>
        <begin position="286"/>
        <end position="306"/>
    </location>
</feature>
<feature type="transmembrane region" description="Helical" evidence="1">
    <location>
        <begin position="313"/>
        <end position="333"/>
    </location>
</feature>
<feature type="transmembrane region" description="Helical" evidence="1">
    <location>
        <begin position="351"/>
        <end position="371"/>
    </location>
</feature>
<feature type="transmembrane region" description="Helical" evidence="1">
    <location>
        <begin position="377"/>
        <end position="397"/>
    </location>
</feature>
<feature type="transmembrane region" description="Helical" evidence="1">
    <location>
        <begin position="408"/>
        <end position="428"/>
    </location>
</feature>
<feature type="mutagenesis site" description="Loss of homodimerization." evidence="4">
    <location>
        <begin position="436"/>
        <end position="445"/>
    </location>
</feature>
<feature type="helix" evidence="7">
    <location>
        <begin position="16"/>
        <end position="35"/>
    </location>
</feature>
<feature type="helix" evidence="7">
    <location>
        <begin position="38"/>
        <end position="40"/>
    </location>
</feature>
<feature type="strand" evidence="7">
    <location>
        <begin position="41"/>
        <end position="43"/>
    </location>
</feature>
<feature type="helix" evidence="7">
    <location>
        <begin position="47"/>
        <end position="58"/>
    </location>
</feature>
<feature type="helix" evidence="7">
    <location>
        <begin position="68"/>
        <end position="71"/>
    </location>
</feature>
<feature type="helix" evidence="7">
    <location>
        <begin position="74"/>
        <end position="89"/>
    </location>
</feature>
<feature type="helix" evidence="7">
    <location>
        <begin position="91"/>
        <end position="101"/>
    </location>
</feature>
<feature type="helix" evidence="7">
    <location>
        <begin position="108"/>
        <end position="117"/>
    </location>
</feature>
<feature type="helix" evidence="7">
    <location>
        <begin position="126"/>
        <end position="156"/>
    </location>
</feature>
<feature type="helix" evidence="7">
    <location>
        <begin position="159"/>
        <end position="173"/>
    </location>
</feature>
<feature type="strand" evidence="7">
    <location>
        <begin position="180"/>
        <end position="185"/>
    </location>
</feature>
<feature type="helix" evidence="6">
    <location>
        <begin position="186"/>
        <end position="188"/>
    </location>
</feature>
<feature type="helix" evidence="7">
    <location>
        <begin position="192"/>
        <end position="207"/>
    </location>
</feature>
<feature type="helix" evidence="7">
    <location>
        <begin position="209"/>
        <end position="217"/>
    </location>
</feature>
<feature type="helix" evidence="7">
    <location>
        <begin position="221"/>
        <end position="223"/>
    </location>
</feature>
<feature type="helix" evidence="7">
    <location>
        <begin position="226"/>
        <end position="249"/>
    </location>
</feature>
<feature type="turn" evidence="7">
    <location>
        <begin position="250"/>
        <end position="252"/>
    </location>
</feature>
<feature type="turn" evidence="7">
    <location>
        <begin position="255"/>
        <end position="258"/>
    </location>
</feature>
<feature type="helix" evidence="7">
    <location>
        <begin position="262"/>
        <end position="274"/>
    </location>
</feature>
<feature type="turn" evidence="7">
    <location>
        <begin position="275"/>
        <end position="279"/>
    </location>
</feature>
<feature type="helix" evidence="7">
    <location>
        <begin position="286"/>
        <end position="288"/>
    </location>
</feature>
<feature type="helix" evidence="7">
    <location>
        <begin position="291"/>
        <end position="302"/>
    </location>
</feature>
<feature type="strand" evidence="7">
    <location>
        <begin position="307"/>
        <end position="310"/>
    </location>
</feature>
<feature type="helix" evidence="7">
    <location>
        <begin position="316"/>
        <end position="330"/>
    </location>
</feature>
<feature type="strand" evidence="7">
    <location>
        <begin position="334"/>
        <end position="338"/>
    </location>
</feature>
<feature type="strand" evidence="7">
    <location>
        <begin position="341"/>
        <end position="343"/>
    </location>
</feature>
<feature type="helix" evidence="7">
    <location>
        <begin position="345"/>
        <end position="372"/>
    </location>
</feature>
<feature type="helix" evidence="7">
    <location>
        <begin position="377"/>
        <end position="388"/>
    </location>
</feature>
<feature type="helix" evidence="7">
    <location>
        <begin position="398"/>
        <end position="400"/>
    </location>
</feature>
<feature type="helix" evidence="7">
    <location>
        <begin position="403"/>
        <end position="418"/>
    </location>
</feature>
<feature type="helix" evidence="7">
    <location>
        <begin position="420"/>
        <end position="427"/>
    </location>
</feature>
<proteinExistence type="evidence at protein level"/>
<protein>
    <recommendedName>
        <fullName>Ktr system potassium uptake protein B</fullName>
        <shortName>K(+)-uptake protein KtrB</shortName>
    </recommendedName>
</protein>
<organism>
    <name type="scientific">Bacillus subtilis (strain 168)</name>
    <dbReference type="NCBI Taxonomy" id="224308"/>
    <lineage>
        <taxon>Bacteria</taxon>
        <taxon>Bacillati</taxon>
        <taxon>Bacillota</taxon>
        <taxon>Bacilli</taxon>
        <taxon>Bacillales</taxon>
        <taxon>Bacillaceae</taxon>
        <taxon>Bacillus</taxon>
    </lineage>
</organism>